<feature type="chain" id="PRO_0000314517" description="Ribosomal RNA large subunit methyltransferase M">
    <location>
        <begin position="1"/>
        <end position="363"/>
    </location>
</feature>
<feature type="active site" description="Proton acceptor" evidence="1">
    <location>
        <position position="313"/>
    </location>
</feature>
<feature type="binding site" evidence="1">
    <location>
        <position position="194"/>
    </location>
    <ligand>
        <name>S-adenosyl-L-methionine</name>
        <dbReference type="ChEBI" id="CHEBI:59789"/>
    </ligand>
</feature>
<feature type="binding site" evidence="1">
    <location>
        <begin position="227"/>
        <end position="230"/>
    </location>
    <ligand>
        <name>S-adenosyl-L-methionine</name>
        <dbReference type="ChEBI" id="CHEBI:59789"/>
    </ligand>
</feature>
<feature type="binding site" evidence="1">
    <location>
        <position position="246"/>
    </location>
    <ligand>
        <name>S-adenosyl-L-methionine</name>
        <dbReference type="ChEBI" id="CHEBI:59789"/>
    </ligand>
</feature>
<feature type="binding site" evidence="1">
    <location>
        <position position="266"/>
    </location>
    <ligand>
        <name>S-adenosyl-L-methionine</name>
        <dbReference type="ChEBI" id="CHEBI:59789"/>
    </ligand>
</feature>
<feature type="binding site" evidence="1">
    <location>
        <position position="284"/>
    </location>
    <ligand>
        <name>S-adenosyl-L-methionine</name>
        <dbReference type="ChEBI" id="CHEBI:59789"/>
    </ligand>
</feature>
<gene>
    <name evidence="1" type="primary">rlmM</name>
    <name type="ordered locus">CGSHiGG_09685</name>
</gene>
<dbReference type="EC" id="2.1.1.186" evidence="1"/>
<dbReference type="EMBL" id="CP000672">
    <property type="protein sequence ID" value="ABR00715.1"/>
    <property type="molecule type" value="Genomic_DNA"/>
</dbReference>
<dbReference type="SMR" id="A5UIV9"/>
<dbReference type="KEGG" id="hiq:CGSHiGG_09685"/>
<dbReference type="HOGENOM" id="CLU_043780_0_0_6"/>
<dbReference type="Proteomes" id="UP000001990">
    <property type="component" value="Chromosome"/>
</dbReference>
<dbReference type="GO" id="GO:0005737">
    <property type="term" value="C:cytoplasm"/>
    <property type="evidence" value="ECO:0007669"/>
    <property type="project" value="UniProtKB-SubCell"/>
</dbReference>
<dbReference type="GO" id="GO:0008757">
    <property type="term" value="F:S-adenosylmethionine-dependent methyltransferase activity"/>
    <property type="evidence" value="ECO:0007669"/>
    <property type="project" value="UniProtKB-UniRule"/>
</dbReference>
<dbReference type="GO" id="GO:0032259">
    <property type="term" value="P:methylation"/>
    <property type="evidence" value="ECO:0007669"/>
    <property type="project" value="UniProtKB-KW"/>
</dbReference>
<dbReference type="GO" id="GO:0006364">
    <property type="term" value="P:rRNA processing"/>
    <property type="evidence" value="ECO:0007669"/>
    <property type="project" value="UniProtKB-UniRule"/>
</dbReference>
<dbReference type="Gene3D" id="3.30.2300.20">
    <property type="match status" value="1"/>
</dbReference>
<dbReference type="Gene3D" id="3.30.70.2810">
    <property type="match status" value="1"/>
</dbReference>
<dbReference type="Gene3D" id="3.40.50.150">
    <property type="entry name" value="Vaccinia Virus protein VP39"/>
    <property type="match status" value="1"/>
</dbReference>
<dbReference type="HAMAP" id="MF_01551">
    <property type="entry name" value="23SrRNA_methyltr_M"/>
    <property type="match status" value="1"/>
</dbReference>
<dbReference type="InterPro" id="IPR040739">
    <property type="entry name" value="RlmM_FDX"/>
</dbReference>
<dbReference type="InterPro" id="IPR048646">
    <property type="entry name" value="RlmM_THUMP-like"/>
</dbReference>
<dbReference type="InterPro" id="IPR002877">
    <property type="entry name" value="RNA_MeTrfase_FtsJ_dom"/>
</dbReference>
<dbReference type="InterPro" id="IPR011224">
    <property type="entry name" value="rRNA_MeTrfase_M"/>
</dbReference>
<dbReference type="InterPro" id="IPR029063">
    <property type="entry name" value="SAM-dependent_MTases_sf"/>
</dbReference>
<dbReference type="NCBIfam" id="NF008734">
    <property type="entry name" value="PRK11760.1"/>
    <property type="match status" value="1"/>
</dbReference>
<dbReference type="PANTHER" id="PTHR37524">
    <property type="entry name" value="RIBOSOMAL RNA LARGE SUBUNIT METHYLTRANSFERASE M"/>
    <property type="match status" value="1"/>
</dbReference>
<dbReference type="PANTHER" id="PTHR37524:SF2">
    <property type="entry name" value="RIBOSOMAL RNA METHYLTRANSFERASE FTSJ DOMAIN-CONTAINING PROTEIN"/>
    <property type="match status" value="1"/>
</dbReference>
<dbReference type="Pfam" id="PF01728">
    <property type="entry name" value="FtsJ"/>
    <property type="match status" value="1"/>
</dbReference>
<dbReference type="Pfam" id="PF18125">
    <property type="entry name" value="RlmM_FDX"/>
    <property type="match status" value="1"/>
</dbReference>
<dbReference type="Pfam" id="PF21239">
    <property type="entry name" value="RLMM_N"/>
    <property type="match status" value="1"/>
</dbReference>
<dbReference type="PIRSF" id="PIRSF028774">
    <property type="entry name" value="UCP028774"/>
    <property type="match status" value="1"/>
</dbReference>
<dbReference type="SUPFAM" id="SSF53335">
    <property type="entry name" value="S-adenosyl-L-methionine-dependent methyltransferases"/>
    <property type="match status" value="1"/>
</dbReference>
<reference key="1">
    <citation type="journal article" date="2007" name="Genome Biol.">
        <title>Characterization and modeling of the Haemophilus influenzae core and supragenomes based on the complete genomic sequences of Rd and 12 clinical nontypeable strains.</title>
        <authorList>
            <person name="Hogg J.S."/>
            <person name="Hu F.Z."/>
            <person name="Janto B."/>
            <person name="Boissy R."/>
            <person name="Hayes J."/>
            <person name="Keefe R."/>
            <person name="Post J.C."/>
            <person name="Ehrlich G.D."/>
        </authorList>
    </citation>
    <scope>NUCLEOTIDE SEQUENCE [LARGE SCALE GENOMIC DNA]</scope>
    <source>
        <strain>PittGG</strain>
    </source>
</reference>
<accession>A5UIV9</accession>
<proteinExistence type="inferred from homology"/>
<name>RLMM_HAEIG</name>
<organism>
    <name type="scientific">Haemophilus influenzae (strain PittGG)</name>
    <dbReference type="NCBI Taxonomy" id="374931"/>
    <lineage>
        <taxon>Bacteria</taxon>
        <taxon>Pseudomonadati</taxon>
        <taxon>Pseudomonadota</taxon>
        <taxon>Gammaproteobacteria</taxon>
        <taxon>Pasteurellales</taxon>
        <taxon>Pasteurellaceae</taxon>
        <taxon>Haemophilus</taxon>
    </lineage>
</organism>
<evidence type="ECO:0000255" key="1">
    <source>
        <dbReference type="HAMAP-Rule" id="MF_01551"/>
    </source>
</evidence>
<comment type="function">
    <text evidence="1">Catalyzes the 2'-O-methylation at nucleotide C2498 in 23S rRNA.</text>
</comment>
<comment type="catalytic activity">
    <reaction evidence="1">
        <text>cytidine(2498) in 23S rRNA + S-adenosyl-L-methionine = 2'-O-methylcytidine(2498) in 23S rRNA + S-adenosyl-L-homocysteine + H(+)</text>
        <dbReference type="Rhea" id="RHEA:42788"/>
        <dbReference type="Rhea" id="RHEA-COMP:10244"/>
        <dbReference type="Rhea" id="RHEA-COMP:10245"/>
        <dbReference type="ChEBI" id="CHEBI:15378"/>
        <dbReference type="ChEBI" id="CHEBI:57856"/>
        <dbReference type="ChEBI" id="CHEBI:59789"/>
        <dbReference type="ChEBI" id="CHEBI:74495"/>
        <dbReference type="ChEBI" id="CHEBI:82748"/>
        <dbReference type="EC" id="2.1.1.186"/>
    </reaction>
</comment>
<comment type="subunit">
    <text evidence="1">Monomer.</text>
</comment>
<comment type="subcellular location">
    <subcellularLocation>
        <location evidence="1">Cytoplasm</location>
    </subcellularLocation>
</comment>
<comment type="similarity">
    <text evidence="1">Belongs to the class I-like SAM-binding methyltransferase superfamily. RNA methyltransferase RlmE family. RlmM subfamily.</text>
</comment>
<keyword id="KW-0963">Cytoplasm</keyword>
<keyword id="KW-0489">Methyltransferase</keyword>
<keyword id="KW-0698">rRNA processing</keyword>
<keyword id="KW-0949">S-adenosyl-L-methionine</keyword>
<keyword id="KW-0808">Transferase</keyword>
<sequence>MNKLALYCRPGFEKEVAAEITDQASHLGVFGFARVQDNSGYVIFECYQPDEADRLARDIPFNRLIFARQMIVISDLLEDLDPADRISPIVAAFEELSQQVNFAQSSELFVETADTNEAKELSTFCRKFTVPLRQALKKQGWLSAKASQKCGQFLHCFFVKPNCCYVGYSYVDNHSSHFMGIPRLKFPADAPSRSTLKLEEAILTFIPRKEENKRLNENMIGVDLGACPGGWTYQLVKRGLFVYAVDHGKMAANLHDTGRIEHCAEDGFKFQPPKRKKVDWLVCDMVEQPSRISSLIGKWLLNGWCRETIFNLKLPMKKRYQEVILCLENLAVMLAEQNLNFEIQAKHLYHDREEITVHIALKP</sequence>
<protein>
    <recommendedName>
        <fullName evidence="1">Ribosomal RNA large subunit methyltransferase M</fullName>
        <ecNumber evidence="1">2.1.1.186</ecNumber>
    </recommendedName>
    <alternativeName>
        <fullName evidence="1">23S rRNA (cytidine2498-2'-O)-methyltransferase</fullName>
    </alternativeName>
    <alternativeName>
        <fullName evidence="1">23S rRNA 2'-O-ribose methyltransferase RlmM</fullName>
    </alternativeName>
</protein>